<reference key="1">
    <citation type="submission" date="2008-10" db="EMBL/GenBank/DDBJ databases">
        <title>Genome sequence of Bacillus cereus G9842.</title>
        <authorList>
            <person name="Dodson R.J."/>
            <person name="Durkin A.S."/>
            <person name="Rosovitz M.J."/>
            <person name="Rasko D.A."/>
            <person name="Hoffmaster A."/>
            <person name="Ravel J."/>
            <person name="Sutton G."/>
        </authorList>
    </citation>
    <scope>NUCLEOTIDE SEQUENCE [LARGE SCALE GENOMIC DNA]</scope>
    <source>
        <strain>G9842</strain>
    </source>
</reference>
<dbReference type="EC" id="6.3.5.2" evidence="1"/>
<dbReference type="EMBL" id="CP001186">
    <property type="protein sequence ID" value="ACK95986.1"/>
    <property type="molecule type" value="Genomic_DNA"/>
</dbReference>
<dbReference type="SMR" id="B7IUT1"/>
<dbReference type="MEROPS" id="C26.957"/>
<dbReference type="KEGG" id="bcg:BCG9842_B5024"/>
<dbReference type="HOGENOM" id="CLU_014340_0_5_9"/>
<dbReference type="UniPathway" id="UPA00189">
    <property type="reaction ID" value="UER00296"/>
</dbReference>
<dbReference type="Proteomes" id="UP000006744">
    <property type="component" value="Chromosome"/>
</dbReference>
<dbReference type="GO" id="GO:0005829">
    <property type="term" value="C:cytosol"/>
    <property type="evidence" value="ECO:0007669"/>
    <property type="project" value="TreeGrafter"/>
</dbReference>
<dbReference type="GO" id="GO:0005524">
    <property type="term" value="F:ATP binding"/>
    <property type="evidence" value="ECO:0007669"/>
    <property type="project" value="UniProtKB-UniRule"/>
</dbReference>
<dbReference type="GO" id="GO:0003921">
    <property type="term" value="F:GMP synthase activity"/>
    <property type="evidence" value="ECO:0007669"/>
    <property type="project" value="InterPro"/>
</dbReference>
<dbReference type="CDD" id="cd01742">
    <property type="entry name" value="GATase1_GMP_Synthase"/>
    <property type="match status" value="1"/>
</dbReference>
<dbReference type="CDD" id="cd01997">
    <property type="entry name" value="GMP_synthase_C"/>
    <property type="match status" value="1"/>
</dbReference>
<dbReference type="FunFam" id="3.30.300.10:FF:000002">
    <property type="entry name" value="GMP synthase [glutamine-hydrolyzing]"/>
    <property type="match status" value="1"/>
</dbReference>
<dbReference type="FunFam" id="3.40.50.620:FF:000001">
    <property type="entry name" value="GMP synthase [glutamine-hydrolyzing]"/>
    <property type="match status" value="1"/>
</dbReference>
<dbReference type="FunFam" id="3.40.50.880:FF:000001">
    <property type="entry name" value="GMP synthase [glutamine-hydrolyzing]"/>
    <property type="match status" value="1"/>
</dbReference>
<dbReference type="Gene3D" id="3.30.300.10">
    <property type="match status" value="1"/>
</dbReference>
<dbReference type="Gene3D" id="3.40.50.880">
    <property type="match status" value="1"/>
</dbReference>
<dbReference type="Gene3D" id="3.40.50.620">
    <property type="entry name" value="HUPs"/>
    <property type="match status" value="1"/>
</dbReference>
<dbReference type="HAMAP" id="MF_00344">
    <property type="entry name" value="GMP_synthase"/>
    <property type="match status" value="1"/>
</dbReference>
<dbReference type="InterPro" id="IPR029062">
    <property type="entry name" value="Class_I_gatase-like"/>
</dbReference>
<dbReference type="InterPro" id="IPR017926">
    <property type="entry name" value="GATASE"/>
</dbReference>
<dbReference type="InterPro" id="IPR001674">
    <property type="entry name" value="GMP_synth_C"/>
</dbReference>
<dbReference type="InterPro" id="IPR004739">
    <property type="entry name" value="GMP_synth_GATase"/>
</dbReference>
<dbReference type="InterPro" id="IPR022955">
    <property type="entry name" value="GMP_synthase"/>
</dbReference>
<dbReference type="InterPro" id="IPR025777">
    <property type="entry name" value="GMPS_ATP_PPase_dom"/>
</dbReference>
<dbReference type="InterPro" id="IPR022310">
    <property type="entry name" value="NAD/GMP_synthase"/>
</dbReference>
<dbReference type="InterPro" id="IPR014729">
    <property type="entry name" value="Rossmann-like_a/b/a_fold"/>
</dbReference>
<dbReference type="NCBIfam" id="TIGR00884">
    <property type="entry name" value="guaA_Cterm"/>
    <property type="match status" value="1"/>
</dbReference>
<dbReference type="NCBIfam" id="TIGR00888">
    <property type="entry name" value="guaA_Nterm"/>
    <property type="match status" value="1"/>
</dbReference>
<dbReference type="NCBIfam" id="NF000848">
    <property type="entry name" value="PRK00074.1"/>
    <property type="match status" value="1"/>
</dbReference>
<dbReference type="PANTHER" id="PTHR11922:SF2">
    <property type="entry name" value="GMP SYNTHASE [GLUTAMINE-HYDROLYZING]"/>
    <property type="match status" value="1"/>
</dbReference>
<dbReference type="PANTHER" id="PTHR11922">
    <property type="entry name" value="GMP SYNTHASE-RELATED"/>
    <property type="match status" value="1"/>
</dbReference>
<dbReference type="Pfam" id="PF00117">
    <property type="entry name" value="GATase"/>
    <property type="match status" value="1"/>
</dbReference>
<dbReference type="Pfam" id="PF00958">
    <property type="entry name" value="GMP_synt_C"/>
    <property type="match status" value="1"/>
</dbReference>
<dbReference type="Pfam" id="PF02540">
    <property type="entry name" value="NAD_synthase"/>
    <property type="match status" value="1"/>
</dbReference>
<dbReference type="PRINTS" id="PR00097">
    <property type="entry name" value="ANTSNTHASEII"/>
</dbReference>
<dbReference type="PRINTS" id="PR00099">
    <property type="entry name" value="CPSGATASE"/>
</dbReference>
<dbReference type="PRINTS" id="PR00096">
    <property type="entry name" value="GATASE"/>
</dbReference>
<dbReference type="SUPFAM" id="SSF52402">
    <property type="entry name" value="Adenine nucleotide alpha hydrolases-like"/>
    <property type="match status" value="1"/>
</dbReference>
<dbReference type="SUPFAM" id="SSF52317">
    <property type="entry name" value="Class I glutamine amidotransferase-like"/>
    <property type="match status" value="1"/>
</dbReference>
<dbReference type="SUPFAM" id="SSF54810">
    <property type="entry name" value="GMP synthetase C-terminal dimerisation domain"/>
    <property type="match status" value="1"/>
</dbReference>
<dbReference type="PROSITE" id="PS51273">
    <property type="entry name" value="GATASE_TYPE_1"/>
    <property type="match status" value="1"/>
</dbReference>
<dbReference type="PROSITE" id="PS51553">
    <property type="entry name" value="GMPS_ATP_PPASE"/>
    <property type="match status" value="1"/>
</dbReference>
<sequence length="512" mass="57346">MKKQHDTIIVLDFGSQYNQLIARRIREFGVYSELHPHTITAEEIKAMNPKGIIFSGGPNSVYGEGALHCDEKIFELGLPIFGICYGMQLMTQHFGGKVERANHREYGKAVLKVENESKLYANLPEEQVVWMSHGDLVTGLPEGFVVDATSESCPIAGMSNEEKNLYGVQFHPEVRHSEHGNDLIKNFVFGVCGCSEGWNMENFIEVELEKIRETVGDKKVLCALSGGVDSSVVAVLIHKAIGDQLTCIFVDHGLLRKGEAEGVMKTFSEGFHMNVIKVDAQERFMNKLKGVEDPEQKRKIIGNEFIYVFDDEASKLQGMDFLAQGTLYTDIVESGTATAQTIKSHHNVGGLPEDMQFKLIEPLNTLFKDEVRVLGSELGIPDEIVWRQPFPGPGLGIRVLGEITEEKLEIVRESDAILREEIIKAGLDREIWQYFTALPGMRSVGVMGDERTYDYTVGIRAVTSIDGMTADWARIPWDVLEKISVRIVNEVKHVNRIVYDVTSKPPATIEWE</sequence>
<keyword id="KW-0067">ATP-binding</keyword>
<keyword id="KW-0315">Glutamine amidotransferase</keyword>
<keyword id="KW-0332">GMP biosynthesis</keyword>
<keyword id="KW-0436">Ligase</keyword>
<keyword id="KW-0547">Nucleotide-binding</keyword>
<keyword id="KW-0658">Purine biosynthesis</keyword>
<gene>
    <name evidence="1" type="primary">guaA</name>
    <name type="ordered locus">BCG9842_B5024</name>
</gene>
<protein>
    <recommendedName>
        <fullName evidence="1">GMP synthase [glutamine-hydrolyzing]</fullName>
        <ecNumber evidence="1">6.3.5.2</ecNumber>
    </recommendedName>
    <alternativeName>
        <fullName evidence="1">GMP synthetase</fullName>
    </alternativeName>
    <alternativeName>
        <fullName evidence="1">Glutamine amidotransferase</fullName>
    </alternativeName>
</protein>
<feature type="chain" id="PRO_1000120214" description="GMP synthase [glutamine-hydrolyzing]">
    <location>
        <begin position="1"/>
        <end position="512"/>
    </location>
</feature>
<feature type="domain" description="Glutamine amidotransferase type-1" evidence="1">
    <location>
        <begin position="7"/>
        <end position="197"/>
    </location>
</feature>
<feature type="domain" description="GMPS ATP-PPase" evidence="1">
    <location>
        <begin position="198"/>
        <end position="387"/>
    </location>
</feature>
<feature type="active site" description="Nucleophile" evidence="1">
    <location>
        <position position="84"/>
    </location>
</feature>
<feature type="active site" evidence="1">
    <location>
        <position position="171"/>
    </location>
</feature>
<feature type="active site" evidence="1">
    <location>
        <position position="173"/>
    </location>
</feature>
<feature type="binding site" evidence="1">
    <location>
        <begin position="225"/>
        <end position="231"/>
    </location>
    <ligand>
        <name>ATP</name>
        <dbReference type="ChEBI" id="CHEBI:30616"/>
    </ligand>
</feature>
<comment type="function">
    <text evidence="1">Catalyzes the synthesis of GMP from XMP.</text>
</comment>
<comment type="catalytic activity">
    <reaction evidence="1">
        <text>XMP + L-glutamine + ATP + H2O = GMP + L-glutamate + AMP + diphosphate + 2 H(+)</text>
        <dbReference type="Rhea" id="RHEA:11680"/>
        <dbReference type="ChEBI" id="CHEBI:15377"/>
        <dbReference type="ChEBI" id="CHEBI:15378"/>
        <dbReference type="ChEBI" id="CHEBI:29985"/>
        <dbReference type="ChEBI" id="CHEBI:30616"/>
        <dbReference type="ChEBI" id="CHEBI:33019"/>
        <dbReference type="ChEBI" id="CHEBI:57464"/>
        <dbReference type="ChEBI" id="CHEBI:58115"/>
        <dbReference type="ChEBI" id="CHEBI:58359"/>
        <dbReference type="ChEBI" id="CHEBI:456215"/>
        <dbReference type="EC" id="6.3.5.2"/>
    </reaction>
</comment>
<comment type="pathway">
    <text evidence="1">Purine metabolism; GMP biosynthesis; GMP from XMP (L-Gln route): step 1/1.</text>
</comment>
<comment type="subunit">
    <text evidence="1">Homodimer.</text>
</comment>
<evidence type="ECO:0000255" key="1">
    <source>
        <dbReference type="HAMAP-Rule" id="MF_00344"/>
    </source>
</evidence>
<accession>B7IUT1</accession>
<organism>
    <name type="scientific">Bacillus cereus (strain G9842)</name>
    <dbReference type="NCBI Taxonomy" id="405531"/>
    <lineage>
        <taxon>Bacteria</taxon>
        <taxon>Bacillati</taxon>
        <taxon>Bacillota</taxon>
        <taxon>Bacilli</taxon>
        <taxon>Bacillales</taxon>
        <taxon>Bacillaceae</taxon>
        <taxon>Bacillus</taxon>
        <taxon>Bacillus cereus group</taxon>
    </lineage>
</organism>
<proteinExistence type="inferred from homology"/>
<name>GUAA_BACC2</name>